<feature type="signal peptide" evidence="1">
    <location>
        <begin position="1"/>
        <end position="21"/>
    </location>
</feature>
<feature type="chain" id="PRO_0000116219" description="Envelope glycoprotein N" evidence="1">
    <location>
        <begin position="22"/>
        <end position="90"/>
    </location>
</feature>
<feature type="topological domain" description="Virion surface" evidence="1">
    <location>
        <begin position="22"/>
        <end position="55"/>
    </location>
</feature>
<feature type="transmembrane region" description="Helical" evidence="1">
    <location>
        <begin position="56"/>
        <end position="76"/>
    </location>
</feature>
<feature type="topological domain" description="Intravirion" evidence="1">
    <location>
        <begin position="77"/>
        <end position="90"/>
    </location>
</feature>
<feature type="disulfide bond" description="Interchain (with gM)" evidence="1">
    <location>
        <position position="44"/>
    </location>
</feature>
<accession>Q01049</accession>
<reference key="1">
    <citation type="journal article" date="1992" name="J. Virol.">
        <title>Primary structure of the herpesvirus saimiri genome.</title>
        <authorList>
            <person name="Albrecht J.-C."/>
            <person name="Nicholas J."/>
            <person name="Biller D."/>
            <person name="Cameron K.R."/>
            <person name="Biesinger B."/>
            <person name="Newman C."/>
            <person name="Wittmann S."/>
            <person name="Craxton M.A."/>
            <person name="Coleman H."/>
            <person name="Fleckenstein B."/>
            <person name="Honess R.W."/>
        </authorList>
    </citation>
    <scope>NUCLEOTIDE SEQUENCE [LARGE SCALE GENOMIC DNA]</scope>
</reference>
<reference key="2">
    <citation type="journal article" date="1992" name="Virology">
        <title>Analysis of nucleotide sequence of the rightmost 43 kbp of herpesvirus saimiri (HVS) L-DNA: general conservation of genetic organization between HVS and Epstein-Barr virus.</title>
        <authorList>
            <person name="Nicholas J."/>
            <person name="Cameron K.R."/>
            <person name="Coleman H."/>
            <person name="Newman C."/>
            <person name="Honess R.W."/>
        </authorList>
    </citation>
    <scope>NUCLEOTIDE SEQUENCE [GENOMIC DNA]</scope>
</reference>
<name>GN_SHV21</name>
<protein>
    <recommendedName>
        <fullName evidence="1">Envelope glycoprotein N</fullName>
    </recommendedName>
</protein>
<dbReference type="EMBL" id="X64346">
    <property type="protein sequence ID" value="CAA45676.1"/>
    <property type="molecule type" value="Genomic_DNA"/>
</dbReference>
<dbReference type="EMBL" id="M86409">
    <property type="protein sequence ID" value="AAA46130.1"/>
    <property type="molecule type" value="Genomic_DNA"/>
</dbReference>
<dbReference type="RefSeq" id="NP_040255.1">
    <property type="nucleotide sequence ID" value="NC_001350.1"/>
</dbReference>
<dbReference type="KEGG" id="vg:1682491"/>
<dbReference type="Proteomes" id="UP000000587">
    <property type="component" value="Segment"/>
</dbReference>
<dbReference type="GO" id="GO:0044177">
    <property type="term" value="C:host cell Golgi apparatus"/>
    <property type="evidence" value="ECO:0007669"/>
    <property type="project" value="UniProtKB-SubCell"/>
</dbReference>
<dbReference type="GO" id="GO:0033644">
    <property type="term" value="C:host cell membrane"/>
    <property type="evidence" value="ECO:0007669"/>
    <property type="project" value="UniProtKB-SubCell"/>
</dbReference>
<dbReference type="GO" id="GO:0016020">
    <property type="term" value="C:membrane"/>
    <property type="evidence" value="ECO:0007669"/>
    <property type="project" value="UniProtKB-KW"/>
</dbReference>
<dbReference type="GO" id="GO:0019031">
    <property type="term" value="C:viral envelope"/>
    <property type="evidence" value="ECO:0007669"/>
    <property type="project" value="UniProtKB-KW"/>
</dbReference>
<dbReference type="GO" id="GO:0055036">
    <property type="term" value="C:virion membrane"/>
    <property type="evidence" value="ECO:0007669"/>
    <property type="project" value="UniProtKB-SubCell"/>
</dbReference>
<dbReference type="HAMAP" id="MF_04037">
    <property type="entry name" value="HSV_GN"/>
    <property type="match status" value="1"/>
</dbReference>
<dbReference type="InterPro" id="IPR005211">
    <property type="entry name" value="Herpes_glycoprotein_N_domain"/>
</dbReference>
<dbReference type="InterPro" id="IPR034707">
    <property type="entry name" value="HSV_GN"/>
</dbReference>
<dbReference type="Pfam" id="PF03554">
    <property type="entry name" value="Herpes_UL73"/>
    <property type="match status" value="1"/>
</dbReference>
<proteinExistence type="inferred from homology"/>
<organism>
    <name type="scientific">Saimiriine herpesvirus 2 (strain 11)</name>
    <name type="common">SaHV-2</name>
    <name type="synonym">Herpesvirus saimiri</name>
    <dbReference type="NCBI Taxonomy" id="10383"/>
    <lineage>
        <taxon>Viruses</taxon>
        <taxon>Duplodnaviria</taxon>
        <taxon>Heunggongvirae</taxon>
        <taxon>Peploviricota</taxon>
        <taxon>Herviviricetes</taxon>
        <taxon>Herpesvirales</taxon>
        <taxon>Orthoherpesviridae</taxon>
        <taxon>Gammaherpesvirinae</taxon>
        <taxon>Rhadinovirus</taxon>
        <taxon>Rhadinovirus saimiriinegamma2</taxon>
        <taxon>Saimiriine herpesvirus 2</taxon>
    </lineage>
</organism>
<keyword id="KW-1015">Disulfide bond</keyword>
<keyword id="KW-1040">Host Golgi apparatus</keyword>
<keyword id="KW-1043">Host membrane</keyword>
<keyword id="KW-0472">Membrane</keyword>
<keyword id="KW-1185">Reference proteome</keyword>
<keyword id="KW-0732">Signal</keyword>
<keyword id="KW-0812">Transmembrane</keyword>
<keyword id="KW-1133">Transmembrane helix</keyword>
<keyword id="KW-0261">Viral envelope protein</keyword>
<keyword id="KW-0946">Virion</keyword>
<gene>
    <name evidence="1" type="primary">gN</name>
    <name type="ORF">53</name>
    <name type="ORF">EDLF2</name>
</gene>
<comment type="function">
    <text evidence="1">Envelope glycoprotein necessary for proper maturation of gM and modulation of its membrane fusion activity. Also plays a critical role in virion morphogenesis.</text>
</comment>
<comment type="subunit">
    <text evidence="1">Interacts (via N-terminus) with gM (via N-terminus). The gM-gN heterodimer forms the gCII complex.</text>
</comment>
<comment type="subcellular location">
    <subcellularLocation>
        <location evidence="1">Virion membrane</location>
        <topology evidence="1">Single-pass type I membrane protein</topology>
    </subcellularLocation>
    <subcellularLocation>
        <location evidence="1">Host membrane</location>
        <topology evidence="1">Single-pass type I membrane protein</topology>
    </subcellularLocation>
    <subcellularLocation>
        <location evidence="1">Host Golgi apparatus</location>
        <location evidence="1">Host trans-Golgi network</location>
    </subcellularLocation>
    <text evidence="1">When coexpressed with gM, localizes in the host trans-Golgi network.</text>
</comment>
<comment type="similarity">
    <text evidence="1">Belongs to the herpesviridae glycoprotein N family.</text>
</comment>
<sequence length="90" mass="10405">MTWKLFICFLSFGVIFLRVSSLTEKSHTTSYTILHNNNFYSNSCSADTYVPSIKTFSSVWAILNVIIFFCASLFYLRHLCIVKFISNLTK</sequence>
<organismHost>
    <name type="scientific">Saimiri sciureus</name>
    <name type="common">Common squirrel monkey</name>
    <dbReference type="NCBI Taxonomy" id="9521"/>
</organismHost>
<evidence type="ECO:0000255" key="1">
    <source>
        <dbReference type="HAMAP-Rule" id="MF_04037"/>
    </source>
</evidence>